<sequence>MMKVIPLGERLLIKPIKEEKKTEGGIVLPDSAKEKPMKAEVVAVGKIEDEEKFDIKVGDKVIFSKYAGTEIKIDDEDYIIIDVNDILAKIEE</sequence>
<proteinExistence type="inferred from homology"/>
<dbReference type="EMBL" id="AF275319">
    <property type="protein sequence ID" value="AAG44818.1"/>
    <property type="molecule type" value="Genomic_DNA"/>
</dbReference>
<dbReference type="SMR" id="Q9EZV2"/>
<dbReference type="GO" id="GO:0005737">
    <property type="term" value="C:cytoplasm"/>
    <property type="evidence" value="ECO:0007669"/>
    <property type="project" value="UniProtKB-SubCell"/>
</dbReference>
<dbReference type="GO" id="GO:0005524">
    <property type="term" value="F:ATP binding"/>
    <property type="evidence" value="ECO:0007669"/>
    <property type="project" value="InterPro"/>
</dbReference>
<dbReference type="GO" id="GO:0046872">
    <property type="term" value="F:metal ion binding"/>
    <property type="evidence" value="ECO:0007669"/>
    <property type="project" value="TreeGrafter"/>
</dbReference>
<dbReference type="GO" id="GO:0044183">
    <property type="term" value="F:protein folding chaperone"/>
    <property type="evidence" value="ECO:0007669"/>
    <property type="project" value="InterPro"/>
</dbReference>
<dbReference type="GO" id="GO:0051087">
    <property type="term" value="F:protein-folding chaperone binding"/>
    <property type="evidence" value="ECO:0007669"/>
    <property type="project" value="TreeGrafter"/>
</dbReference>
<dbReference type="GO" id="GO:0051082">
    <property type="term" value="F:unfolded protein binding"/>
    <property type="evidence" value="ECO:0007669"/>
    <property type="project" value="TreeGrafter"/>
</dbReference>
<dbReference type="GO" id="GO:0051085">
    <property type="term" value="P:chaperone cofactor-dependent protein refolding"/>
    <property type="evidence" value="ECO:0007669"/>
    <property type="project" value="TreeGrafter"/>
</dbReference>
<dbReference type="CDD" id="cd00320">
    <property type="entry name" value="cpn10"/>
    <property type="match status" value="1"/>
</dbReference>
<dbReference type="FunFam" id="2.30.33.40:FF:000001">
    <property type="entry name" value="10 kDa chaperonin"/>
    <property type="match status" value="1"/>
</dbReference>
<dbReference type="Gene3D" id="2.30.33.40">
    <property type="entry name" value="GroES chaperonin"/>
    <property type="match status" value="1"/>
</dbReference>
<dbReference type="HAMAP" id="MF_00580">
    <property type="entry name" value="CH10"/>
    <property type="match status" value="1"/>
</dbReference>
<dbReference type="InterPro" id="IPR020818">
    <property type="entry name" value="Chaperonin_GroES"/>
</dbReference>
<dbReference type="InterPro" id="IPR037124">
    <property type="entry name" value="Chaperonin_GroES_sf"/>
</dbReference>
<dbReference type="InterPro" id="IPR018369">
    <property type="entry name" value="Chaprnonin_Cpn10_CS"/>
</dbReference>
<dbReference type="InterPro" id="IPR011032">
    <property type="entry name" value="GroES-like_sf"/>
</dbReference>
<dbReference type="NCBIfam" id="NF001531">
    <property type="entry name" value="PRK00364.2-2"/>
    <property type="match status" value="1"/>
</dbReference>
<dbReference type="NCBIfam" id="NF011106">
    <property type="entry name" value="PRK14533.1"/>
    <property type="match status" value="1"/>
</dbReference>
<dbReference type="PANTHER" id="PTHR10772">
    <property type="entry name" value="10 KDA HEAT SHOCK PROTEIN"/>
    <property type="match status" value="1"/>
</dbReference>
<dbReference type="PANTHER" id="PTHR10772:SF63">
    <property type="entry name" value="20 KDA CHAPERONIN, CHLOROPLASTIC"/>
    <property type="match status" value="1"/>
</dbReference>
<dbReference type="Pfam" id="PF00166">
    <property type="entry name" value="Cpn10"/>
    <property type="match status" value="1"/>
</dbReference>
<dbReference type="PRINTS" id="PR00297">
    <property type="entry name" value="CHAPERONIN10"/>
</dbReference>
<dbReference type="SMART" id="SM00883">
    <property type="entry name" value="Cpn10"/>
    <property type="match status" value="1"/>
</dbReference>
<dbReference type="SUPFAM" id="SSF50129">
    <property type="entry name" value="GroES-like"/>
    <property type="match status" value="1"/>
</dbReference>
<dbReference type="PROSITE" id="PS00681">
    <property type="entry name" value="CHAPERONINS_CPN10"/>
    <property type="match status" value="1"/>
</dbReference>
<comment type="function">
    <text evidence="1">Together with the chaperonin GroEL, plays an essential role in assisting protein folding. The GroEL-GroES system forms a nano-cage that allows encapsulation of the non-native substrate proteins and provides a physical environment optimized to promote and accelerate protein folding. GroES binds to the apical surface of the GroEL ring, thereby capping the opening of the GroEL channel.</text>
</comment>
<comment type="subunit">
    <text evidence="1">Heptamer of 7 subunits arranged in a ring. Interacts with the chaperonin GroEL.</text>
</comment>
<comment type="subcellular location">
    <subcellularLocation>
        <location evidence="1">Cytoplasm</location>
    </subcellularLocation>
</comment>
<comment type="similarity">
    <text evidence="1">Belongs to the GroES chaperonin family.</text>
</comment>
<organism>
    <name type="scientific">Thermotoga neapolitana</name>
    <dbReference type="NCBI Taxonomy" id="2337"/>
    <lineage>
        <taxon>Bacteria</taxon>
        <taxon>Thermotogati</taxon>
        <taxon>Thermotogota</taxon>
        <taxon>Thermotogae</taxon>
        <taxon>Thermotogales</taxon>
        <taxon>Thermotogaceae</taxon>
        <taxon>Thermotoga</taxon>
    </lineage>
</organism>
<evidence type="ECO:0000255" key="1">
    <source>
        <dbReference type="HAMAP-Rule" id="MF_00580"/>
    </source>
</evidence>
<protein>
    <recommendedName>
        <fullName evidence="1">Co-chaperonin GroES</fullName>
    </recommendedName>
    <alternativeName>
        <fullName evidence="1">10 kDa chaperonin</fullName>
    </alternativeName>
    <alternativeName>
        <fullName evidence="1">Chaperonin-10</fullName>
        <shortName evidence="1">Cpn10</shortName>
    </alternativeName>
</protein>
<name>CH10_THENE</name>
<feature type="chain" id="PRO_0000174884" description="Co-chaperonin GroES">
    <location>
        <begin position="1"/>
        <end position="92"/>
    </location>
</feature>
<accession>Q9EZV2</accession>
<gene>
    <name evidence="1" type="primary">groES</name>
    <name evidence="1" type="synonym">groS</name>
</gene>
<reference key="1">
    <citation type="submission" date="2000-06" db="EMBL/GenBank/DDBJ databases">
        <title>Effect of thermostable chaperonins on synthesis of proteins in vitro.</title>
        <authorList>
            <person name="Snapyan M."/>
            <person name="Gochikyan A."/>
            <person name="Weigel P."/>
            <person name="Sakanyan V."/>
        </authorList>
    </citation>
    <scope>NUCLEOTIDE SEQUENCE [GENOMIC DNA]</scope>
    <source>
        <strain>DSM 5068 / LA4</strain>
    </source>
</reference>
<keyword id="KW-0143">Chaperone</keyword>
<keyword id="KW-0963">Cytoplasm</keyword>